<sequence length="181" mass="20929">MSFSDQNLIWIDLEMTGLDPEMHKIIEMATIVTDSELNILAEGPVIAIHQPESELAKMDEWCTTTHTASGLVARVRQSQVSEEEAIDQTLAFLKQWVPEGKSPICGNSIGQDRRFLYKHMPRLEAYFHYRYIDVSTIKELTRRWQPEVLKEFSKTGSHLALDDIRESIAELQFYRKAVFKI</sequence>
<proteinExistence type="evidence at protein level"/>
<dbReference type="EC" id="3.1.15.-" evidence="1"/>
<dbReference type="EMBL" id="CP000627">
    <property type="protein sequence ID" value="ABQ19537.1"/>
    <property type="molecule type" value="Genomic_DNA"/>
</dbReference>
<dbReference type="EMBL" id="CP001235">
    <property type="protein sequence ID" value="ACP08407.1"/>
    <property type="molecule type" value="Genomic_DNA"/>
</dbReference>
<dbReference type="RefSeq" id="WP_000010183.1">
    <property type="nucleotide sequence ID" value="NZ_JAACZH010000036.1"/>
</dbReference>
<dbReference type="PDB" id="6N6A">
    <property type="method" value="X-ray"/>
    <property type="resolution" value="1.50 A"/>
    <property type="chains" value="A=1-181"/>
</dbReference>
<dbReference type="PDB" id="6N6C">
    <property type="method" value="X-ray"/>
    <property type="resolution" value="1.62 A"/>
    <property type="chains" value="A=1-181"/>
</dbReference>
<dbReference type="PDBsum" id="6N6A"/>
<dbReference type="PDBsum" id="6N6C"/>
<dbReference type="SMR" id="A5F3M7"/>
<dbReference type="KEGG" id="vco:VC0395_A2743"/>
<dbReference type="KEGG" id="vcr:VC395_0384"/>
<dbReference type="PATRIC" id="fig|345073.21.peg.372"/>
<dbReference type="eggNOG" id="COG1949">
    <property type="taxonomic scope" value="Bacteria"/>
</dbReference>
<dbReference type="HOGENOM" id="CLU_064761_2_0_6"/>
<dbReference type="OrthoDB" id="9801329at2"/>
<dbReference type="Proteomes" id="UP000000249">
    <property type="component" value="Chromosome 2"/>
</dbReference>
<dbReference type="GO" id="GO:0005737">
    <property type="term" value="C:cytoplasm"/>
    <property type="evidence" value="ECO:0007669"/>
    <property type="project" value="UniProtKB-SubCell"/>
</dbReference>
<dbReference type="GO" id="GO:0000175">
    <property type="term" value="F:3'-5'-RNA exonuclease activity"/>
    <property type="evidence" value="ECO:0007669"/>
    <property type="project" value="InterPro"/>
</dbReference>
<dbReference type="GO" id="GO:0003676">
    <property type="term" value="F:nucleic acid binding"/>
    <property type="evidence" value="ECO:0007669"/>
    <property type="project" value="InterPro"/>
</dbReference>
<dbReference type="GO" id="GO:0006259">
    <property type="term" value="P:DNA metabolic process"/>
    <property type="evidence" value="ECO:0007669"/>
    <property type="project" value="UniProtKB-ARBA"/>
</dbReference>
<dbReference type="CDD" id="cd06135">
    <property type="entry name" value="Orn"/>
    <property type="match status" value="1"/>
</dbReference>
<dbReference type="FunFam" id="3.30.420.10:FF:000003">
    <property type="entry name" value="Oligoribonuclease"/>
    <property type="match status" value="1"/>
</dbReference>
<dbReference type="Gene3D" id="3.30.420.10">
    <property type="entry name" value="Ribonuclease H-like superfamily/Ribonuclease H"/>
    <property type="match status" value="1"/>
</dbReference>
<dbReference type="HAMAP" id="MF_00045">
    <property type="entry name" value="Oligoribonuclease"/>
    <property type="match status" value="1"/>
</dbReference>
<dbReference type="InterPro" id="IPR013520">
    <property type="entry name" value="Exonuclease_RNaseT/DNA_pol3"/>
</dbReference>
<dbReference type="InterPro" id="IPR022894">
    <property type="entry name" value="Oligoribonuclease"/>
</dbReference>
<dbReference type="InterPro" id="IPR012337">
    <property type="entry name" value="RNaseH-like_sf"/>
</dbReference>
<dbReference type="InterPro" id="IPR036397">
    <property type="entry name" value="RNaseH_sf"/>
</dbReference>
<dbReference type="NCBIfam" id="NF003765">
    <property type="entry name" value="PRK05359.1"/>
    <property type="match status" value="1"/>
</dbReference>
<dbReference type="PANTHER" id="PTHR11046">
    <property type="entry name" value="OLIGORIBONUCLEASE, MITOCHONDRIAL"/>
    <property type="match status" value="1"/>
</dbReference>
<dbReference type="PANTHER" id="PTHR11046:SF0">
    <property type="entry name" value="OLIGORIBONUCLEASE, MITOCHONDRIAL"/>
    <property type="match status" value="1"/>
</dbReference>
<dbReference type="Pfam" id="PF00929">
    <property type="entry name" value="RNase_T"/>
    <property type="match status" value="1"/>
</dbReference>
<dbReference type="SMART" id="SM00479">
    <property type="entry name" value="EXOIII"/>
    <property type="match status" value="1"/>
</dbReference>
<dbReference type="SUPFAM" id="SSF53098">
    <property type="entry name" value="Ribonuclease H-like"/>
    <property type="match status" value="1"/>
</dbReference>
<organism>
    <name type="scientific">Vibrio cholerae serotype O1 (strain ATCC 39541 / Classical Ogawa 395 / O395)</name>
    <dbReference type="NCBI Taxonomy" id="345073"/>
    <lineage>
        <taxon>Bacteria</taxon>
        <taxon>Pseudomonadati</taxon>
        <taxon>Pseudomonadota</taxon>
        <taxon>Gammaproteobacteria</taxon>
        <taxon>Vibrionales</taxon>
        <taxon>Vibrionaceae</taxon>
        <taxon>Vibrio</taxon>
    </lineage>
</organism>
<keyword id="KW-0002">3D-structure</keyword>
<keyword id="KW-0963">Cytoplasm</keyword>
<keyword id="KW-0269">Exonuclease</keyword>
<keyword id="KW-0378">Hydrolase</keyword>
<keyword id="KW-0540">Nuclease</keyword>
<comment type="function">
    <text evidence="1">3'-to-5' exoribonuclease specific for small oligoribonucleotides.</text>
</comment>
<comment type="subcellular location">
    <subcellularLocation>
        <location evidence="1">Cytoplasm</location>
    </subcellularLocation>
</comment>
<comment type="similarity">
    <text evidence="1">Belongs to the oligoribonuclease family.</text>
</comment>
<gene>
    <name evidence="1" type="primary">orn</name>
    <name type="ordered locus">VC0395_A2743</name>
    <name type="ordered locus">VC395_0384</name>
</gene>
<reference key="1">
    <citation type="submission" date="2007-03" db="EMBL/GenBank/DDBJ databases">
        <authorList>
            <person name="Heidelberg J."/>
        </authorList>
    </citation>
    <scope>NUCLEOTIDE SEQUENCE [LARGE SCALE GENOMIC DNA]</scope>
    <source>
        <strain>ATCC 39541 / Classical Ogawa 395 / O395</strain>
    </source>
</reference>
<reference key="2">
    <citation type="journal article" date="2008" name="PLoS ONE">
        <title>A recalibrated molecular clock and independent origins for the cholera pandemic clones.</title>
        <authorList>
            <person name="Feng L."/>
            <person name="Reeves P.R."/>
            <person name="Lan R."/>
            <person name="Ren Y."/>
            <person name="Gao C."/>
            <person name="Zhou Z."/>
            <person name="Ren Y."/>
            <person name="Cheng J."/>
            <person name="Wang W."/>
            <person name="Wang J."/>
            <person name="Qian W."/>
            <person name="Li D."/>
            <person name="Wang L."/>
        </authorList>
    </citation>
    <scope>NUCLEOTIDE SEQUENCE [LARGE SCALE GENOMIC DNA]</scope>
    <source>
        <strain>ATCC 39541 / Classical Ogawa 395 / O395</strain>
    </source>
</reference>
<feature type="chain" id="PRO_1000071091" description="Oligoribonuclease">
    <location>
        <begin position="1"/>
        <end position="181"/>
    </location>
</feature>
<feature type="domain" description="Exonuclease" evidence="1">
    <location>
        <begin position="8"/>
        <end position="171"/>
    </location>
</feature>
<feature type="active site" evidence="1">
    <location>
        <position position="129"/>
    </location>
</feature>
<feature type="strand" evidence="2">
    <location>
        <begin position="8"/>
        <end position="18"/>
    </location>
</feature>
<feature type="turn" evidence="2">
    <location>
        <begin position="20"/>
        <end position="22"/>
    </location>
</feature>
<feature type="strand" evidence="2">
    <location>
        <begin position="25"/>
        <end position="33"/>
    </location>
</feature>
<feature type="strand" evidence="2">
    <location>
        <begin position="39"/>
        <end position="47"/>
    </location>
</feature>
<feature type="helix" evidence="2">
    <location>
        <begin position="52"/>
        <end position="55"/>
    </location>
</feature>
<feature type="helix" evidence="2">
    <location>
        <begin position="60"/>
        <end position="68"/>
    </location>
</feature>
<feature type="helix" evidence="2">
    <location>
        <begin position="71"/>
        <end position="77"/>
    </location>
</feature>
<feature type="helix" evidence="2">
    <location>
        <begin position="82"/>
        <end position="93"/>
    </location>
</feature>
<feature type="turn" evidence="2">
    <location>
        <begin position="94"/>
        <end position="96"/>
    </location>
</feature>
<feature type="turn" evidence="2">
    <location>
        <begin position="99"/>
        <end position="101"/>
    </location>
</feature>
<feature type="strand" evidence="2">
    <location>
        <begin position="104"/>
        <end position="108"/>
    </location>
</feature>
<feature type="helix" evidence="2">
    <location>
        <begin position="109"/>
        <end position="119"/>
    </location>
</feature>
<feature type="helix" evidence="2">
    <location>
        <begin position="121"/>
        <end position="124"/>
    </location>
</feature>
<feature type="strand" evidence="2">
    <location>
        <begin position="131"/>
        <end position="133"/>
    </location>
</feature>
<feature type="helix" evidence="2">
    <location>
        <begin position="134"/>
        <end position="144"/>
    </location>
</feature>
<feature type="helix" evidence="2">
    <location>
        <begin position="146"/>
        <end position="151"/>
    </location>
</feature>
<feature type="helix" evidence="2">
    <location>
        <begin position="160"/>
        <end position="177"/>
    </location>
</feature>
<evidence type="ECO:0000255" key="1">
    <source>
        <dbReference type="HAMAP-Rule" id="MF_00045"/>
    </source>
</evidence>
<evidence type="ECO:0007829" key="2">
    <source>
        <dbReference type="PDB" id="6N6A"/>
    </source>
</evidence>
<accession>A5F3M7</accession>
<accession>C3M3Z9</accession>
<name>ORN_VIBC3</name>
<protein>
    <recommendedName>
        <fullName evidence="1">Oligoribonuclease</fullName>
        <ecNumber evidence="1">3.1.15.-</ecNumber>
    </recommendedName>
</protein>